<organism>
    <name type="scientific">Vaccinia virus (strain Western Reserve)</name>
    <name type="common">VACV</name>
    <name type="synonym">Vaccinia virus (strain WR)</name>
    <dbReference type="NCBI Taxonomy" id="10254"/>
    <lineage>
        <taxon>Viruses</taxon>
        <taxon>Varidnaviria</taxon>
        <taxon>Bamfordvirae</taxon>
        <taxon>Nucleocytoviricota</taxon>
        <taxon>Pokkesviricetes</taxon>
        <taxon>Chitovirales</taxon>
        <taxon>Poxviridae</taxon>
        <taxon>Chordopoxvirinae</taxon>
        <taxon>Orthopoxvirus</taxon>
        <taxon>Vaccinia virus</taxon>
    </lineage>
</organism>
<sequence length="226" mass="26428">MLSMFMCNNIVDYVDDIDNGIVQDIEDEASNNVDHDYVYPLPENMVYRFDKSTNILDYLSTERDHVMMAVRYYMSKQRLDDLYRQLPTKTRSYIDIINIYCDKVSNDYNRDMNIMYDMASTKSFTVYDINNEVNTILMDNKGLGVRLATISFITELGRRCMNPVETIKMFTLLSHTICDDYFVDYITDISPPDNTIPNTSTREYLKLIGITAIMFATYKTLKYMIG</sequence>
<comment type="function">
    <text evidence="2 3">Plays a role in evading host innate immune response by inhibiting host inflammasome activation. Interacts with and inhibits NLR-mediated interleukin-1 beta/IL1B production in infected cells. At the host mitochondria outer membrane, interacts with the BH3 domain of host BAK and prevents BAK from binding active BAX. In turn, host apoptosis is inhibited.</text>
</comment>
<comment type="subunit">
    <text evidence="1 3">Homodimer. Interacts with host pro-apoptotic protein BCL2L11 (via BH3 domain) (By similarity). Interacts with host NLRP1 (PubMed:23603272). Interacts with host BAK (PubMed:16439990).</text>
</comment>
<comment type="interaction">
    <interactant intactId="EBI-8041400">
        <id>P24356</id>
    </interactant>
    <interactant intactId="EBI-519866">
        <id>Q16611</id>
        <label>BAK1</label>
    </interactant>
    <organismsDiffer>true</organismsDiffer>
    <experiments>6</experiments>
</comment>
<comment type="subcellular location">
    <subcellularLocation>
        <location evidence="2">Host mitochondrion outer membrane</location>
    </subcellularLocation>
    <subcellularLocation>
        <location evidence="2">Host cytoplasm</location>
    </subcellularLocation>
</comment>
<comment type="induction">
    <text evidence="4">Expressed in the early phase of the viral replicative cycle.</text>
</comment>
<comment type="similarity">
    <text evidence="5">Belongs to the orthopoxvirus OPG045 family.</text>
</comment>
<dbReference type="EMBL" id="AY243312">
    <property type="protein sequence ID" value="AAO89319.1"/>
    <property type="molecule type" value="Genomic_DNA"/>
</dbReference>
<dbReference type="EMBL" id="M34368">
    <property type="protein sequence ID" value="AAA48247.1"/>
    <property type="molecule type" value="mRNA"/>
</dbReference>
<dbReference type="PIR" id="I36213">
    <property type="entry name" value="I36213"/>
</dbReference>
<dbReference type="RefSeq" id="YP_232922.1">
    <property type="nucleotide sequence ID" value="NC_006998.1"/>
</dbReference>
<dbReference type="SMR" id="P24356"/>
<dbReference type="BioGRID" id="3508851">
    <property type="interactions" value="2"/>
</dbReference>
<dbReference type="IntAct" id="P24356">
    <property type="interactions" value="1"/>
</dbReference>
<dbReference type="MINT" id="P24356"/>
<dbReference type="MEROPS" id="I91.001"/>
<dbReference type="DNASU" id="3707497"/>
<dbReference type="GeneID" id="3707497"/>
<dbReference type="KEGG" id="vg:3707497"/>
<dbReference type="Proteomes" id="UP000000344">
    <property type="component" value="Genome"/>
</dbReference>
<dbReference type="GO" id="GO:0044193">
    <property type="term" value="C:host cell mitochondrial outer membrane"/>
    <property type="evidence" value="ECO:0007669"/>
    <property type="project" value="UniProtKB-SubCell"/>
</dbReference>
<dbReference type="GO" id="GO:0033650">
    <property type="term" value="C:host cell mitochondrion"/>
    <property type="evidence" value="ECO:0000314"/>
    <property type="project" value="UniProtKB"/>
</dbReference>
<dbReference type="GO" id="GO:0016020">
    <property type="term" value="C:membrane"/>
    <property type="evidence" value="ECO:0007669"/>
    <property type="project" value="UniProtKB-KW"/>
</dbReference>
<dbReference type="GO" id="GO:0005739">
    <property type="term" value="C:mitochondrion"/>
    <property type="evidence" value="ECO:0000314"/>
    <property type="project" value="UniProt"/>
</dbReference>
<dbReference type="GO" id="GO:0140311">
    <property type="term" value="F:protein sequestering activity"/>
    <property type="evidence" value="ECO:0000314"/>
    <property type="project" value="UniProt"/>
</dbReference>
<dbReference type="GO" id="GO:0032692">
    <property type="term" value="P:negative regulation of interleukin-1 production"/>
    <property type="evidence" value="ECO:0000314"/>
    <property type="project" value="UniProtKB"/>
</dbReference>
<dbReference type="GO" id="GO:0042981">
    <property type="term" value="P:regulation of apoptotic process"/>
    <property type="evidence" value="ECO:0007669"/>
    <property type="project" value="InterPro"/>
</dbReference>
<dbReference type="GO" id="GO:0033668">
    <property type="term" value="P:symbiont-mediated suppression of host apoptosis"/>
    <property type="evidence" value="ECO:0000314"/>
    <property type="project" value="UniProtKB"/>
</dbReference>
<dbReference type="FunFam" id="1.10.437.10:FF:000013">
    <property type="entry name" value="Protein F1"/>
    <property type="match status" value="1"/>
</dbReference>
<dbReference type="Gene3D" id="1.10.437.10">
    <property type="entry name" value="Blc2-like"/>
    <property type="match status" value="1"/>
</dbReference>
<dbReference type="InterPro" id="IPR036834">
    <property type="entry name" value="Bcl-2-like_sf"/>
</dbReference>
<dbReference type="InterPro" id="IPR011207">
    <property type="entry name" value="Orthopox_F1"/>
</dbReference>
<dbReference type="InterPro" id="IPR021119">
    <property type="entry name" value="Poxvirus_F1/C10"/>
</dbReference>
<dbReference type="Pfam" id="PF11099">
    <property type="entry name" value="M11L"/>
    <property type="match status" value="1"/>
</dbReference>
<dbReference type="PIRSF" id="PIRSF015971">
    <property type="entry name" value="VAC_F1L"/>
    <property type="match status" value="1"/>
</dbReference>
<gene>
    <name type="primary">OPG045</name>
    <name type="synonym">F1L</name>
    <name type="ordered locus">VACWR040</name>
</gene>
<keyword id="KW-0244">Early protein</keyword>
<keyword id="KW-1035">Host cytoplasm</keyword>
<keyword id="KW-1043">Host membrane</keyword>
<keyword id="KW-1045">Host mitochondrion</keyword>
<keyword id="KW-1047">Host mitochondrion outer membrane</keyword>
<keyword id="KW-0945">Host-virus interaction</keyword>
<keyword id="KW-1081">Inhibition of host apoptosis by viral BCL2-like protein</keyword>
<keyword id="KW-0472">Membrane</keyword>
<keyword id="KW-1119">Modulation of host cell apoptosis by virus</keyword>
<keyword id="KW-1185">Reference proteome</keyword>
<protein>
    <recommendedName>
        <fullName>Apoptosis regulator OPG045</fullName>
    </recommendedName>
    <alternativeName>
        <fullName>Protein F1</fullName>
    </alternativeName>
</protein>
<proteinExistence type="evidence at protein level"/>
<reference key="1">
    <citation type="submission" date="2003-02" db="EMBL/GenBank/DDBJ databases">
        <title>Sequencing of the coding region of Vaccinia-WR to an average 9-fold redundancy and an error rate of 0.16/10kb.</title>
        <authorList>
            <person name="Esposito J.J."/>
            <person name="Frace A.M."/>
            <person name="Sammons S.A."/>
            <person name="Olsen-Rasmussen M."/>
            <person name="Osborne J."/>
            <person name="Wohlhueter R."/>
        </authorList>
    </citation>
    <scope>NUCLEOTIDE SEQUENCE [LARGE SCALE GENOMIC DNA]</scope>
</reference>
<reference key="2">
    <citation type="journal article" date="1990" name="Virology">
        <title>The vaccinia virus HindIII F fragment: nucleotide sequence of the left 6.2 kb.</title>
        <authorList>
            <person name="Roseman N.A."/>
            <person name="Slabaugh M.B."/>
        </authorList>
    </citation>
    <scope>NUCLEOTIDE SEQUENCE [MRNA] OF 1-207</scope>
</reference>
<reference key="3">
    <citation type="journal article" date="2006" name="Cell Death Differ.">
        <title>Interaction of F1L with the BH3 domain of Bak is responsible for inhibiting vaccinia-induced apoptosis.</title>
        <authorList>
            <person name="Postigo A."/>
            <person name="Cross J.R."/>
            <person name="Downward J."/>
            <person name="Way M."/>
        </authorList>
    </citation>
    <scope>FUNCTION</scope>
    <scope>INTERACTION WITH HOST BAK</scope>
    <scope>SUBCELLULAR LOCATION</scope>
</reference>
<reference key="4">
    <citation type="journal article" date="2013" name="Proc. Natl. Acad. Sci. U.S.A.">
        <title>Vaccinia virus F1L protein promotes virulence by inhibiting inflammasome activation.</title>
        <authorList>
            <person name="Gerlic M."/>
            <person name="Faustin B."/>
            <person name="Postigo A."/>
            <person name="Yu E.C."/>
            <person name="Proell M."/>
            <person name="Gombosuren N."/>
            <person name="Krajewska M."/>
            <person name="Flynn R."/>
            <person name="Croft M."/>
            <person name="Way M."/>
            <person name="Satterthwait A."/>
            <person name="Liddington R.C."/>
            <person name="Salek-Ardakani S."/>
            <person name="Matsuzawa S."/>
            <person name="Reed J.C."/>
        </authorList>
    </citation>
    <scope>FUNCTION</scope>
    <scope>INTERACTION WITH HOST NLRP1</scope>
    <scope>REGION</scope>
</reference>
<reference key="5">
    <citation type="journal article" date="2015" name="J. Virol.">
        <title>Deciphering poxvirus gene expression by RNA sequencing and ribosome profiling.</title>
        <authorList>
            <person name="Yang Z."/>
            <person name="Cao S."/>
            <person name="Martens C.A."/>
            <person name="Porcella S.F."/>
            <person name="Xie Z."/>
            <person name="Ma M."/>
            <person name="Shen B."/>
            <person name="Moss B."/>
        </authorList>
    </citation>
    <scope>INDUCTION</scope>
</reference>
<name>PG045_VACCW</name>
<accession>P24356</accession>
<accession>Q80HY1</accession>
<organismHost>
    <name type="scientific">Bos taurus</name>
    <name type="common">Bovine</name>
    <dbReference type="NCBI Taxonomy" id="9913"/>
</organismHost>
<evidence type="ECO:0000250" key="1">
    <source>
        <dbReference type="UniProtKB" id="O57173"/>
    </source>
</evidence>
<evidence type="ECO:0000269" key="2">
    <source>
    </source>
</evidence>
<evidence type="ECO:0000269" key="3">
    <source>
    </source>
</evidence>
<evidence type="ECO:0000269" key="4">
    <source>
    </source>
</evidence>
<evidence type="ECO:0000305" key="5"/>
<feature type="chain" id="PRO_0000099476" description="Apoptosis regulator OPG045">
    <location>
        <begin position="1"/>
        <end position="226"/>
    </location>
</feature>
<feature type="region of interest" description="Essential and sufficient to inhibit host NLRP1" evidence="3">
    <location>
        <begin position="32"/>
        <end position="37"/>
    </location>
</feature>